<protein>
    <recommendedName>
        <fullName>Putative uncharacterized protein DDB_G0277465</fullName>
    </recommendedName>
</protein>
<reference key="1">
    <citation type="journal article" date="2002" name="Nature">
        <title>Sequence and analysis of chromosome 2 of Dictyostelium discoideum.</title>
        <authorList>
            <person name="Gloeckner G."/>
            <person name="Eichinger L."/>
            <person name="Szafranski K."/>
            <person name="Pachebat J.A."/>
            <person name="Bankier A.T."/>
            <person name="Dear P.H."/>
            <person name="Lehmann R."/>
            <person name="Baumgart C."/>
            <person name="Parra G."/>
            <person name="Abril J.F."/>
            <person name="Guigo R."/>
            <person name="Kumpf K."/>
            <person name="Tunggal B."/>
            <person name="Cox E.C."/>
            <person name="Quail M.A."/>
            <person name="Platzer M."/>
            <person name="Rosenthal A."/>
            <person name="Noegel A.A."/>
        </authorList>
    </citation>
    <scope>NUCLEOTIDE SEQUENCE [LARGE SCALE GENOMIC DNA]</scope>
    <source>
        <strain>AX4</strain>
    </source>
</reference>
<reference key="2">
    <citation type="journal article" date="2005" name="Nature">
        <title>The genome of the social amoeba Dictyostelium discoideum.</title>
        <authorList>
            <person name="Eichinger L."/>
            <person name="Pachebat J.A."/>
            <person name="Gloeckner G."/>
            <person name="Rajandream M.A."/>
            <person name="Sucgang R."/>
            <person name="Berriman M."/>
            <person name="Song J."/>
            <person name="Olsen R."/>
            <person name="Szafranski K."/>
            <person name="Xu Q."/>
            <person name="Tunggal B."/>
            <person name="Kummerfeld S."/>
            <person name="Madera M."/>
            <person name="Konfortov B.A."/>
            <person name="Rivero F."/>
            <person name="Bankier A.T."/>
            <person name="Lehmann R."/>
            <person name="Hamlin N."/>
            <person name="Davies R."/>
            <person name="Gaudet P."/>
            <person name="Fey P."/>
            <person name="Pilcher K."/>
            <person name="Chen G."/>
            <person name="Saunders D."/>
            <person name="Sodergren E.J."/>
            <person name="Davis P."/>
            <person name="Kerhornou A."/>
            <person name="Nie X."/>
            <person name="Hall N."/>
            <person name="Anjard C."/>
            <person name="Hemphill L."/>
            <person name="Bason N."/>
            <person name="Farbrother P."/>
            <person name="Desany B."/>
            <person name="Just E."/>
            <person name="Morio T."/>
            <person name="Rost R."/>
            <person name="Churcher C.M."/>
            <person name="Cooper J."/>
            <person name="Haydock S."/>
            <person name="van Driessche N."/>
            <person name="Cronin A."/>
            <person name="Goodhead I."/>
            <person name="Muzny D.M."/>
            <person name="Mourier T."/>
            <person name="Pain A."/>
            <person name="Lu M."/>
            <person name="Harper D."/>
            <person name="Lindsay R."/>
            <person name="Hauser H."/>
            <person name="James K.D."/>
            <person name="Quiles M."/>
            <person name="Madan Babu M."/>
            <person name="Saito T."/>
            <person name="Buchrieser C."/>
            <person name="Wardroper A."/>
            <person name="Felder M."/>
            <person name="Thangavelu M."/>
            <person name="Johnson D."/>
            <person name="Knights A."/>
            <person name="Loulseged H."/>
            <person name="Mungall K.L."/>
            <person name="Oliver K."/>
            <person name="Price C."/>
            <person name="Quail M.A."/>
            <person name="Urushihara H."/>
            <person name="Hernandez J."/>
            <person name="Rabbinowitsch E."/>
            <person name="Steffen D."/>
            <person name="Sanders M."/>
            <person name="Ma J."/>
            <person name="Kohara Y."/>
            <person name="Sharp S."/>
            <person name="Simmonds M.N."/>
            <person name="Spiegler S."/>
            <person name="Tivey A."/>
            <person name="Sugano S."/>
            <person name="White B."/>
            <person name="Walker D."/>
            <person name="Woodward J.R."/>
            <person name="Winckler T."/>
            <person name="Tanaka Y."/>
            <person name="Shaulsky G."/>
            <person name="Schleicher M."/>
            <person name="Weinstock G.M."/>
            <person name="Rosenthal A."/>
            <person name="Cox E.C."/>
            <person name="Chisholm R.L."/>
            <person name="Gibbs R.A."/>
            <person name="Loomis W.F."/>
            <person name="Platzer M."/>
            <person name="Kay R.R."/>
            <person name="Williams J.G."/>
            <person name="Dear P.H."/>
            <person name="Noegel A.A."/>
            <person name="Barrell B.G."/>
            <person name="Kuspa A."/>
        </authorList>
    </citation>
    <scope>NUCLEOTIDE SEQUENCE [LARGE SCALE GENOMIC DNA]</scope>
    <source>
        <strain>AX4</strain>
    </source>
</reference>
<dbReference type="EMBL" id="AAFI02000020">
    <property type="protein sequence ID" value="EAL68695.1"/>
    <property type="molecule type" value="Genomic_DNA"/>
</dbReference>
<dbReference type="RefSeq" id="XP_642663.1">
    <property type="nucleotide sequence ID" value="XM_637571.1"/>
</dbReference>
<dbReference type="PaxDb" id="44689-DDB0169264"/>
<dbReference type="EnsemblProtists" id="EAL68695">
    <property type="protein sequence ID" value="EAL68695"/>
    <property type="gene ID" value="DDB_G0277465"/>
</dbReference>
<dbReference type="GeneID" id="8621079"/>
<dbReference type="KEGG" id="ddi:DDB_G0277465"/>
<dbReference type="dictyBase" id="DDB_G0277465"/>
<dbReference type="VEuPathDB" id="AmoebaDB:DDB_G0277465"/>
<dbReference type="HOGENOM" id="CLU_1470786_0_0_1"/>
<dbReference type="InParanoid" id="Q8MN46"/>
<dbReference type="PRO" id="PR:Q8MN46"/>
<dbReference type="Proteomes" id="UP000002195">
    <property type="component" value="Chromosome 2"/>
</dbReference>
<dbReference type="Gene3D" id="2.70.9.10">
    <property type="entry name" value="Adenovirus Type 2 Hexon, domain 4"/>
    <property type="match status" value="1"/>
</dbReference>
<keyword id="KW-1185">Reference proteome</keyword>
<organism>
    <name type="scientific">Dictyostelium discoideum</name>
    <name type="common">Social amoeba</name>
    <dbReference type="NCBI Taxonomy" id="44689"/>
    <lineage>
        <taxon>Eukaryota</taxon>
        <taxon>Amoebozoa</taxon>
        <taxon>Evosea</taxon>
        <taxon>Eumycetozoa</taxon>
        <taxon>Dictyostelia</taxon>
        <taxon>Dictyosteliales</taxon>
        <taxon>Dictyosteliaceae</taxon>
        <taxon>Dictyostelium</taxon>
    </lineage>
</organism>
<feature type="chain" id="PRO_0000348184" description="Putative uncharacterized protein DDB_G0277465">
    <location>
        <begin position="1"/>
        <end position="184"/>
    </location>
</feature>
<feature type="region of interest" description="Disordered" evidence="1">
    <location>
        <begin position="1"/>
        <end position="24"/>
    </location>
</feature>
<accession>Q8MN46</accession>
<accession>Q54ZH9</accession>
<sequence>MGISDQINSNLSSQSPFTVSTNPSDSMFLPTNRIAKTADWKEEKKYYYPKESIQSIYEGTTVRIVIDKQNGRLYGLEMVVEIGPLTANGATFTRLCRDVAHSMAYSVSIWNGNNEIHRLHMDHERIEMVLTKLKHERDMEDKMAGYYDDATRTALGATKQKLIFDLNFFHTVHTSDALYLNAWH</sequence>
<name>Y9264_DICDI</name>
<gene>
    <name type="ORF">DDB_G0277465</name>
</gene>
<evidence type="ECO:0000256" key="1">
    <source>
        <dbReference type="SAM" id="MobiDB-lite"/>
    </source>
</evidence>
<proteinExistence type="predicted"/>